<accession>P17671</accession>
<accession>B3DN68</accession>
<accession>B3DN69</accession>
<accession>Q8IQS1</accession>
<accession>Q8IQS3</accession>
<organism>
    <name type="scientific">Drosophila melanogaster</name>
    <name type="common">Fruit fly</name>
    <dbReference type="NCBI Taxonomy" id="7227"/>
    <lineage>
        <taxon>Eukaryota</taxon>
        <taxon>Metazoa</taxon>
        <taxon>Ecdysozoa</taxon>
        <taxon>Arthropoda</taxon>
        <taxon>Hexapoda</taxon>
        <taxon>Insecta</taxon>
        <taxon>Pterygota</taxon>
        <taxon>Neoptera</taxon>
        <taxon>Endopterygota</taxon>
        <taxon>Diptera</taxon>
        <taxon>Brachycera</taxon>
        <taxon>Muscomorpha</taxon>
        <taxon>Ephydroidea</taxon>
        <taxon>Drosophilidae</taxon>
        <taxon>Drosophila</taxon>
        <taxon>Sophophora</taxon>
    </lineage>
</organism>
<comment type="function">
    <text evidence="4">Implicated in the regulation of ecdysone-triggered gene hierarchies. Probably plays a key role in mediating the regulation of the larval molt by 20-OH-ecdysone.</text>
</comment>
<comment type="subcellular location">
    <subcellularLocation>
        <location evidence="1">Nucleus</location>
    </subcellularLocation>
</comment>
<comment type="alternative products">
    <event type="alternative splicing"/>
    <isoform>
        <id>P17671-1</id>
        <name>C</name>
        <name>E75A</name>
        <sequence type="displayed"/>
    </isoform>
    <isoform>
        <id>P17672-1</id>
        <name>A</name>
        <name>E75B</name>
        <sequence type="external"/>
    </isoform>
    <isoform>
        <id>P13055-2</id>
        <name>B</name>
        <name>E75C</name>
        <sequence type="external"/>
    </isoform>
    <isoform>
        <id>P17671-2</id>
        <name>D</name>
        <sequence type="described" ref="VSP_014915 VSP_014916"/>
    </isoform>
</comment>
<comment type="developmental stage">
    <text evidence="4">In mid instar larvae salivary glands, low basal levels are observed in puff stage 1. Levels increase in late larvae from puff stages 3-10, then decrease abruptly at stage 11. In prepupae, isoform C is the predominant form during the transition between puff stages 18-19. At puff stage 1, expression is also present in the gut. By stage 3 it is present in the wing disks, Malpighian tubules and the fat body. At stage 11, expression is only present in the gut and wing disks.</text>
</comment>
<comment type="induction">
    <text evidence="4">The expression of this protein is developmentally regulated and is correlated with the 20-OH-ecdysone induced activity of puff 75B.</text>
</comment>
<comment type="similarity">
    <text evidence="6">Belongs to the nuclear hormone receptor family. NR1 subfamily.</text>
</comment>
<comment type="sequence caution" evidence="6">
    <conflict type="frameshift">
        <sequence resource="EMBL-CDS" id="CAA35923"/>
    </conflict>
</comment>
<sequence>MLMSADSSDSAKTSVICSTVSASMLAPPAPEQPSTTAPPILGVTGRSHLENALKLPPNTSVSAYYQHNSKLGMGQNYNPEFRSLVAPVTDLDTVPPTGVTMASSSNSPNSSVKLPHSGVIFVSKSSAVSTTDGPTAVLQQQQPQQQMPQHFESLPHHHPQQEHQPQQQQQQHHLQHHPHPHVMYPHGYQQANLHHSGGIAVVPADSRPQTPEYIKSYPVMDTTVASSVKGEPELNIEFDGTTVLCRVCGDKASGFHYGVHSCEGCKGFFRRSIQQKIQYRPCTKNQQCSILRINRNRCQYCRLKKCIAVGMSRDAVRFGRVPKREKARILAAMQQSTQNRGQQRALATELDDQPRLLAAVLRAHLETCEFTKEKVSAMRQRARDCPSYSMPTLLACPLNPAPELQSEQEFSQRFAHVIRGVIDFAGMIPGFQLLTQDDKFTLLKAGLFDALFVRLICMFDSSINSIICLNGQVMRRDAIQNGANARFLVDSTFNFAERMNSMNLTDAEIGLFCAIVLITPDRPGLRNLELIEKMYSRLKGCLQYIVAQNRPDQPEFLAKLLETMPDLRTLSTLHTEKLVVFRTEHKELLRQQMWSMEDGNNSDGQQNKSPSGSWADAMDVEAAKSPLGSVSSTESADLDYGSPSSSQPQGVSLPSPPQQQPSALASSAPLLAATLSGGCPLRNRANSGSSGDSGAAEMDIVGSHAHLTQNGLTITPIVRHQQQQQQQQQIGILNNAHSRNLNGGHAMCQQQQQHPQLHHHLTAGAARYRKLDSPTDSGIESGNEKNECKAVSSGGSSSCSSPRSSVDDALDCSDAAANHNQVVQHPQLSVVSVSPVRSPQPSTSSHLKRQIVEDMPVLKRVLQAPPLYDTNSLMDEAYKPHKKFRALRHREFETAEADASSSTSGSNSLSAGSPRQSPVPNSVATPPPSAASAAAGNPAQSQLHMHLTRSSPKASMASSHSVLAKSLMAEPRMTPEQMKRSDIIQNYLKRENSTAASSTTNGVGNRSPSSSSTPPPSAVQNQQRWGSSSVITTTCQQRQQSVSPHSNGSSSSSSSSSSSSSSSSSTSSNCSSSSASSCQYFQSPHSTSNGTSAPASSSSGSNSATPLLELQVDIADSAQPLNLSKKSPTPPPSKLHALVAAANAVQRYPTLSADVTVTASNGGPPSAAASPAPSSSPPASVGSPNPGLSAAVHKVMLEA</sequence>
<evidence type="ECO:0000255" key="1">
    <source>
        <dbReference type="PROSITE-ProRule" id="PRU00407"/>
    </source>
</evidence>
<evidence type="ECO:0000255" key="2">
    <source>
        <dbReference type="PROSITE-ProRule" id="PRU01189"/>
    </source>
</evidence>
<evidence type="ECO:0000256" key="3">
    <source>
        <dbReference type="SAM" id="MobiDB-lite"/>
    </source>
</evidence>
<evidence type="ECO:0000269" key="4">
    <source>
    </source>
</evidence>
<evidence type="ECO:0000303" key="5">
    <source ref="4"/>
</evidence>
<evidence type="ECO:0000305" key="6"/>
<protein>
    <recommendedName>
        <fullName>Ecdysone-induced protein 75B, isoforms C/D</fullName>
    </recommendedName>
    <alternativeName>
        <fullName>E75-A</fullName>
    </alternativeName>
    <alternativeName>
        <fullName>Nuclear receptor subfamily 1 group D member 3, isoforms C/D</fullName>
    </alternativeName>
</protein>
<dbReference type="EMBL" id="X51548">
    <property type="protein sequence ID" value="CAA35923.1"/>
    <property type="status" value="ALT_FRAME"/>
    <property type="molecule type" value="mRNA"/>
</dbReference>
<dbReference type="EMBL" id="AE014296">
    <property type="protein sequence ID" value="AAN11687.1"/>
    <property type="molecule type" value="Genomic_DNA"/>
</dbReference>
<dbReference type="EMBL" id="AE014296">
    <property type="protein sequence ID" value="AAN11689.1"/>
    <property type="molecule type" value="Genomic_DNA"/>
</dbReference>
<dbReference type="EMBL" id="BT032856">
    <property type="protein sequence ID" value="ACD81870.1"/>
    <property type="molecule type" value="mRNA"/>
</dbReference>
<dbReference type="EMBL" id="BT032857">
    <property type="protein sequence ID" value="ACD81871.1"/>
    <property type="molecule type" value="mRNA"/>
</dbReference>
<dbReference type="PIR" id="A34598">
    <property type="entry name" value="A34598"/>
</dbReference>
<dbReference type="RefSeq" id="NP_730322.1">
    <molecule id="P17671-1"/>
    <property type="nucleotide sequence ID" value="NM_168756.2"/>
</dbReference>
<dbReference type="RefSeq" id="NP_730323.1">
    <molecule id="P17671-2"/>
    <property type="nucleotide sequence ID" value="NM_168757.1"/>
</dbReference>
<dbReference type="SMR" id="P17671"/>
<dbReference type="BioGRID" id="65284">
    <property type="interactions" value="19"/>
</dbReference>
<dbReference type="IntAct" id="P17671">
    <property type="interactions" value="3"/>
</dbReference>
<dbReference type="DNASU" id="39999"/>
<dbReference type="EnsemblMetazoa" id="FBtr0075149">
    <molecule id="P17671-1"/>
    <property type="protein sequence ID" value="FBpp0074915"/>
    <property type="gene ID" value="FBgn0000568"/>
</dbReference>
<dbReference type="EnsemblMetazoa" id="FBtr0075151">
    <molecule id="P17671-2"/>
    <property type="protein sequence ID" value="FBpp0074917"/>
    <property type="gene ID" value="FBgn0000568"/>
</dbReference>
<dbReference type="GeneID" id="39999"/>
<dbReference type="AGR" id="FB:FBgn0000568"/>
<dbReference type="CTD" id="39999"/>
<dbReference type="FlyBase" id="FBgn0000568">
    <property type="gene designation" value="Eip75B"/>
</dbReference>
<dbReference type="VEuPathDB" id="VectorBase:FBgn0000568"/>
<dbReference type="OrthoDB" id="7634782at2759"/>
<dbReference type="SignaLink" id="P17671"/>
<dbReference type="BioGRID-ORCS" id="39999">
    <property type="hits" value="1 hit in 3 CRISPR screens"/>
</dbReference>
<dbReference type="ChiTaRS" id="Eip75B">
    <property type="organism name" value="fly"/>
</dbReference>
<dbReference type="GenomeRNAi" id="39999"/>
<dbReference type="Proteomes" id="UP000000803">
    <property type="component" value="Chromosome 3L"/>
</dbReference>
<dbReference type="Bgee" id="FBgn0000568">
    <property type="expression patterns" value="Expressed in epithelial cell in haltere and 290 other cell types or tissues"/>
</dbReference>
<dbReference type="ExpressionAtlas" id="P17671">
    <property type="expression patterns" value="baseline and differential"/>
</dbReference>
<dbReference type="GO" id="GO:0005634">
    <property type="term" value="C:nucleus"/>
    <property type="evidence" value="ECO:0000314"/>
    <property type="project" value="FlyBase"/>
</dbReference>
<dbReference type="GO" id="GO:0003677">
    <property type="term" value="F:DNA binding"/>
    <property type="evidence" value="ECO:0000314"/>
    <property type="project" value="FlyBase"/>
</dbReference>
<dbReference type="GO" id="GO:0020037">
    <property type="term" value="F:heme binding"/>
    <property type="evidence" value="ECO:0000314"/>
    <property type="project" value="FlyBase"/>
</dbReference>
<dbReference type="GO" id="GO:0004879">
    <property type="term" value="F:nuclear receptor activity"/>
    <property type="evidence" value="ECO:0000318"/>
    <property type="project" value="GO_Central"/>
</dbReference>
<dbReference type="GO" id="GO:0000978">
    <property type="term" value="F:RNA polymerase II cis-regulatory region sequence-specific DNA binding"/>
    <property type="evidence" value="ECO:0000318"/>
    <property type="project" value="GO_Central"/>
</dbReference>
<dbReference type="GO" id="GO:0008270">
    <property type="term" value="F:zinc ion binding"/>
    <property type="evidence" value="ECO:0007669"/>
    <property type="project" value="UniProtKB-KW"/>
</dbReference>
<dbReference type="GO" id="GO:0030154">
    <property type="term" value="P:cell differentiation"/>
    <property type="evidence" value="ECO:0000318"/>
    <property type="project" value="GO_Central"/>
</dbReference>
<dbReference type="GO" id="GO:0018990">
    <property type="term" value="P:ecdysis, chitin-based cuticle"/>
    <property type="evidence" value="ECO:0000315"/>
    <property type="project" value="FlyBase"/>
</dbReference>
<dbReference type="GO" id="GO:0009755">
    <property type="term" value="P:hormone-mediated signaling pathway"/>
    <property type="evidence" value="ECO:0000318"/>
    <property type="project" value="GO_Central"/>
</dbReference>
<dbReference type="GO" id="GO:0030522">
    <property type="term" value="P:intracellular receptor signaling pathway"/>
    <property type="evidence" value="ECO:0000318"/>
    <property type="project" value="GO_Central"/>
</dbReference>
<dbReference type="GO" id="GO:0007591">
    <property type="term" value="P:molting cycle, chitin-based cuticle"/>
    <property type="evidence" value="ECO:0000315"/>
    <property type="project" value="FlyBase"/>
</dbReference>
<dbReference type="GO" id="GO:0000122">
    <property type="term" value="P:negative regulation of transcription by RNA polymerase II"/>
    <property type="evidence" value="ECO:0000250"/>
    <property type="project" value="FlyBase"/>
</dbReference>
<dbReference type="GO" id="GO:0048477">
    <property type="term" value="P:oogenesis"/>
    <property type="evidence" value="ECO:0000303"/>
    <property type="project" value="FlyBase"/>
</dbReference>
<dbReference type="GO" id="GO:0045944">
    <property type="term" value="P:positive regulation of transcription by RNA polymerase II"/>
    <property type="evidence" value="ECO:0000318"/>
    <property type="project" value="GO_Central"/>
</dbReference>
<dbReference type="GO" id="GO:0007553">
    <property type="term" value="P:regulation of ecdysteroid metabolic process"/>
    <property type="evidence" value="ECO:0000315"/>
    <property type="project" value="FlyBase"/>
</dbReference>
<dbReference type="GO" id="GO:0010468">
    <property type="term" value="P:regulation of gene expression"/>
    <property type="evidence" value="ECO:0000314"/>
    <property type="project" value="FlyBase"/>
</dbReference>
<dbReference type="GO" id="GO:0035075">
    <property type="term" value="P:response to ecdysone"/>
    <property type="evidence" value="ECO:0000315"/>
    <property type="project" value="FlyBase"/>
</dbReference>
<dbReference type="CDD" id="cd07166">
    <property type="entry name" value="NR_DBD_REV_ERB"/>
    <property type="match status" value="1"/>
</dbReference>
<dbReference type="CDD" id="cd06940">
    <property type="entry name" value="NR_LBD_REV_ERB"/>
    <property type="match status" value="1"/>
</dbReference>
<dbReference type="FunFam" id="1.10.565.10:FF:000029">
    <property type="entry name" value="Ecdysone-induced protein 75B, isoform B"/>
    <property type="match status" value="1"/>
</dbReference>
<dbReference type="FunFam" id="3.30.50.10:FF:000013">
    <property type="entry name" value="Nuclear receptor subfamily 1 group D member 2"/>
    <property type="match status" value="1"/>
</dbReference>
<dbReference type="Gene3D" id="3.30.50.10">
    <property type="entry name" value="Erythroid Transcription Factor GATA-1, subunit A"/>
    <property type="match status" value="1"/>
</dbReference>
<dbReference type="Gene3D" id="1.10.565.10">
    <property type="entry name" value="Retinoid X Receptor"/>
    <property type="match status" value="1"/>
</dbReference>
<dbReference type="InterPro" id="IPR035500">
    <property type="entry name" value="NHR-like_dom_sf"/>
</dbReference>
<dbReference type="InterPro" id="IPR000536">
    <property type="entry name" value="Nucl_hrmn_rcpt_lig-bd"/>
</dbReference>
<dbReference type="InterPro" id="IPR050234">
    <property type="entry name" value="Nuclear_hormone_rcpt_NR1"/>
</dbReference>
<dbReference type="InterPro" id="IPR001723">
    <property type="entry name" value="Nuclear_hrmn_rcpt"/>
</dbReference>
<dbReference type="InterPro" id="IPR001728">
    <property type="entry name" value="ThyrH_rcpt"/>
</dbReference>
<dbReference type="InterPro" id="IPR001628">
    <property type="entry name" value="Znf_hrmn_rcpt"/>
</dbReference>
<dbReference type="InterPro" id="IPR013088">
    <property type="entry name" value="Znf_NHR/GATA"/>
</dbReference>
<dbReference type="PANTHER" id="PTHR24082:SF473">
    <property type="entry name" value="ECDYSONE-INDUCED PROTEIN 75B, ISOFORM B"/>
    <property type="match status" value="1"/>
</dbReference>
<dbReference type="PANTHER" id="PTHR24082">
    <property type="entry name" value="NUCLEAR HORMONE RECEPTOR"/>
    <property type="match status" value="1"/>
</dbReference>
<dbReference type="Pfam" id="PF00104">
    <property type="entry name" value="Hormone_recep"/>
    <property type="match status" value="1"/>
</dbReference>
<dbReference type="Pfam" id="PF00105">
    <property type="entry name" value="zf-C4"/>
    <property type="match status" value="1"/>
</dbReference>
<dbReference type="PRINTS" id="PR00398">
    <property type="entry name" value="STRDHORMONER"/>
</dbReference>
<dbReference type="PRINTS" id="PR00047">
    <property type="entry name" value="STROIDFINGER"/>
</dbReference>
<dbReference type="PRINTS" id="PR00546">
    <property type="entry name" value="THYROIDHORMR"/>
</dbReference>
<dbReference type="SMART" id="SM00430">
    <property type="entry name" value="HOLI"/>
    <property type="match status" value="1"/>
</dbReference>
<dbReference type="SMART" id="SM00399">
    <property type="entry name" value="ZnF_C4"/>
    <property type="match status" value="1"/>
</dbReference>
<dbReference type="SUPFAM" id="SSF57716">
    <property type="entry name" value="Glucocorticoid receptor-like (DNA-binding domain)"/>
    <property type="match status" value="1"/>
</dbReference>
<dbReference type="SUPFAM" id="SSF48508">
    <property type="entry name" value="Nuclear receptor ligand-binding domain"/>
    <property type="match status" value="1"/>
</dbReference>
<dbReference type="PROSITE" id="PS51843">
    <property type="entry name" value="NR_LBD"/>
    <property type="match status" value="1"/>
</dbReference>
<dbReference type="PROSITE" id="PS00031">
    <property type="entry name" value="NUCLEAR_REC_DBD_1"/>
    <property type="match status" value="1"/>
</dbReference>
<dbReference type="PROSITE" id="PS51030">
    <property type="entry name" value="NUCLEAR_REC_DBD_2"/>
    <property type="match status" value="1"/>
</dbReference>
<name>E75BC_DROME</name>
<reference key="1">
    <citation type="journal article" date="1990" name="Genes Dev.">
        <title>The E75 ecdysone-inducible gene responsible for the 75B early puff in Drosophila encodes two new members of the steroid receptor superfamily.</title>
        <authorList>
            <person name="Segraves W.A."/>
            <person name="Hogness D.S."/>
        </authorList>
    </citation>
    <scope>NUCLEOTIDE SEQUENCE [MRNA] (ISOFORM C)</scope>
    <scope>ALTERNATIVE SPLICING</scope>
    <source>
        <strain>Canton-S</strain>
    </source>
</reference>
<reference key="2">
    <citation type="journal article" date="2000" name="Science">
        <title>The genome sequence of Drosophila melanogaster.</title>
        <authorList>
            <person name="Adams M.D."/>
            <person name="Celniker S.E."/>
            <person name="Holt R.A."/>
            <person name="Evans C.A."/>
            <person name="Gocayne J.D."/>
            <person name="Amanatides P.G."/>
            <person name="Scherer S.E."/>
            <person name="Li P.W."/>
            <person name="Hoskins R.A."/>
            <person name="Galle R.F."/>
            <person name="George R.A."/>
            <person name="Lewis S.E."/>
            <person name="Richards S."/>
            <person name="Ashburner M."/>
            <person name="Henderson S.N."/>
            <person name="Sutton G.G."/>
            <person name="Wortman J.R."/>
            <person name="Yandell M.D."/>
            <person name="Zhang Q."/>
            <person name="Chen L.X."/>
            <person name="Brandon R.C."/>
            <person name="Rogers Y.-H.C."/>
            <person name="Blazej R.G."/>
            <person name="Champe M."/>
            <person name="Pfeiffer B.D."/>
            <person name="Wan K.H."/>
            <person name="Doyle C."/>
            <person name="Baxter E.G."/>
            <person name="Helt G."/>
            <person name="Nelson C.R."/>
            <person name="Miklos G.L.G."/>
            <person name="Abril J.F."/>
            <person name="Agbayani A."/>
            <person name="An H.-J."/>
            <person name="Andrews-Pfannkoch C."/>
            <person name="Baldwin D."/>
            <person name="Ballew R.M."/>
            <person name="Basu A."/>
            <person name="Baxendale J."/>
            <person name="Bayraktaroglu L."/>
            <person name="Beasley E.M."/>
            <person name="Beeson K.Y."/>
            <person name="Benos P.V."/>
            <person name="Berman B.P."/>
            <person name="Bhandari D."/>
            <person name="Bolshakov S."/>
            <person name="Borkova D."/>
            <person name="Botchan M.R."/>
            <person name="Bouck J."/>
            <person name="Brokstein P."/>
            <person name="Brottier P."/>
            <person name="Burtis K.C."/>
            <person name="Busam D.A."/>
            <person name="Butler H."/>
            <person name="Cadieu E."/>
            <person name="Center A."/>
            <person name="Chandra I."/>
            <person name="Cherry J.M."/>
            <person name="Cawley S."/>
            <person name="Dahlke C."/>
            <person name="Davenport L.B."/>
            <person name="Davies P."/>
            <person name="de Pablos B."/>
            <person name="Delcher A."/>
            <person name="Deng Z."/>
            <person name="Mays A.D."/>
            <person name="Dew I."/>
            <person name="Dietz S.M."/>
            <person name="Dodson K."/>
            <person name="Doup L.E."/>
            <person name="Downes M."/>
            <person name="Dugan-Rocha S."/>
            <person name="Dunkov B.C."/>
            <person name="Dunn P."/>
            <person name="Durbin K.J."/>
            <person name="Evangelista C.C."/>
            <person name="Ferraz C."/>
            <person name="Ferriera S."/>
            <person name="Fleischmann W."/>
            <person name="Fosler C."/>
            <person name="Gabrielian A.E."/>
            <person name="Garg N.S."/>
            <person name="Gelbart W.M."/>
            <person name="Glasser K."/>
            <person name="Glodek A."/>
            <person name="Gong F."/>
            <person name="Gorrell J.H."/>
            <person name="Gu Z."/>
            <person name="Guan P."/>
            <person name="Harris M."/>
            <person name="Harris N.L."/>
            <person name="Harvey D.A."/>
            <person name="Heiman T.J."/>
            <person name="Hernandez J.R."/>
            <person name="Houck J."/>
            <person name="Hostin D."/>
            <person name="Houston K.A."/>
            <person name="Howland T.J."/>
            <person name="Wei M.-H."/>
            <person name="Ibegwam C."/>
            <person name="Jalali M."/>
            <person name="Kalush F."/>
            <person name="Karpen G.H."/>
            <person name="Ke Z."/>
            <person name="Kennison J.A."/>
            <person name="Ketchum K.A."/>
            <person name="Kimmel B.E."/>
            <person name="Kodira C.D."/>
            <person name="Kraft C.L."/>
            <person name="Kravitz S."/>
            <person name="Kulp D."/>
            <person name="Lai Z."/>
            <person name="Lasko P."/>
            <person name="Lei Y."/>
            <person name="Levitsky A.A."/>
            <person name="Li J.H."/>
            <person name="Li Z."/>
            <person name="Liang Y."/>
            <person name="Lin X."/>
            <person name="Liu X."/>
            <person name="Mattei B."/>
            <person name="McIntosh T.C."/>
            <person name="McLeod M.P."/>
            <person name="McPherson D."/>
            <person name="Merkulov G."/>
            <person name="Milshina N.V."/>
            <person name="Mobarry C."/>
            <person name="Morris J."/>
            <person name="Moshrefi A."/>
            <person name="Mount S.M."/>
            <person name="Moy M."/>
            <person name="Murphy B."/>
            <person name="Murphy L."/>
            <person name="Muzny D.M."/>
            <person name="Nelson D.L."/>
            <person name="Nelson D.R."/>
            <person name="Nelson K.A."/>
            <person name="Nixon K."/>
            <person name="Nusskern D.R."/>
            <person name="Pacleb J.M."/>
            <person name="Palazzolo M."/>
            <person name="Pittman G.S."/>
            <person name="Pan S."/>
            <person name="Pollard J."/>
            <person name="Puri V."/>
            <person name="Reese M.G."/>
            <person name="Reinert K."/>
            <person name="Remington K."/>
            <person name="Saunders R.D.C."/>
            <person name="Scheeler F."/>
            <person name="Shen H."/>
            <person name="Shue B.C."/>
            <person name="Siden-Kiamos I."/>
            <person name="Simpson M."/>
            <person name="Skupski M.P."/>
            <person name="Smith T.J."/>
            <person name="Spier E."/>
            <person name="Spradling A.C."/>
            <person name="Stapleton M."/>
            <person name="Strong R."/>
            <person name="Sun E."/>
            <person name="Svirskas R."/>
            <person name="Tector C."/>
            <person name="Turner R."/>
            <person name="Venter E."/>
            <person name="Wang A.H."/>
            <person name="Wang X."/>
            <person name="Wang Z.-Y."/>
            <person name="Wassarman D.A."/>
            <person name="Weinstock G.M."/>
            <person name="Weissenbach J."/>
            <person name="Williams S.M."/>
            <person name="Woodage T."/>
            <person name="Worley K.C."/>
            <person name="Wu D."/>
            <person name="Yang S."/>
            <person name="Yao Q.A."/>
            <person name="Ye J."/>
            <person name="Yeh R.-F."/>
            <person name="Zaveri J.S."/>
            <person name="Zhan M."/>
            <person name="Zhang G."/>
            <person name="Zhao Q."/>
            <person name="Zheng L."/>
            <person name="Zheng X.H."/>
            <person name="Zhong F.N."/>
            <person name="Zhong W."/>
            <person name="Zhou X."/>
            <person name="Zhu S.C."/>
            <person name="Zhu X."/>
            <person name="Smith H.O."/>
            <person name="Gibbs R.A."/>
            <person name="Myers E.W."/>
            <person name="Rubin G.M."/>
            <person name="Venter J.C."/>
        </authorList>
    </citation>
    <scope>NUCLEOTIDE SEQUENCE [LARGE SCALE GENOMIC DNA]</scope>
    <source>
        <strain>Berkeley</strain>
    </source>
</reference>
<reference key="3">
    <citation type="journal article" date="2002" name="Genome Biol.">
        <title>Annotation of the Drosophila melanogaster euchromatic genome: a systematic review.</title>
        <authorList>
            <person name="Misra S."/>
            <person name="Crosby M.A."/>
            <person name="Mungall C.J."/>
            <person name="Matthews B.B."/>
            <person name="Campbell K.S."/>
            <person name="Hradecky P."/>
            <person name="Huang Y."/>
            <person name="Kaminker J.S."/>
            <person name="Millburn G.H."/>
            <person name="Prochnik S.E."/>
            <person name="Smith C.D."/>
            <person name="Tupy J.L."/>
            <person name="Whitfield E.J."/>
            <person name="Bayraktaroglu L."/>
            <person name="Berman B.P."/>
            <person name="Bettencourt B.R."/>
            <person name="Celniker S.E."/>
            <person name="de Grey A.D.N.J."/>
            <person name="Drysdale R.A."/>
            <person name="Harris N.L."/>
            <person name="Richter J."/>
            <person name="Russo S."/>
            <person name="Schroeder A.J."/>
            <person name="Shu S.Q."/>
            <person name="Stapleton M."/>
            <person name="Yamada C."/>
            <person name="Ashburner M."/>
            <person name="Gelbart W.M."/>
            <person name="Rubin G.M."/>
            <person name="Lewis S.E."/>
        </authorList>
    </citation>
    <scope>GENOME REANNOTATION</scope>
    <scope>ALTERNATIVE SPLICING</scope>
    <source>
        <strain>Berkeley</strain>
    </source>
</reference>
<reference key="4">
    <citation type="submission" date="2008-05" db="EMBL/GenBank/DDBJ databases">
        <authorList>
            <person name="Carlson J.W."/>
            <person name="Booth B."/>
            <person name="Frise E."/>
            <person name="Park S."/>
            <person name="Wan K.H."/>
            <person name="Yu C."/>
            <person name="Celniker S.E."/>
        </authorList>
    </citation>
    <scope>NUCLEOTIDE SEQUENCE [LARGE SCALE MRNA] (ISOFORMS C AND D)</scope>
    <source>
        <strain>Berkeley</strain>
        <tissue>Embryo</tissue>
    </source>
</reference>
<reference key="5">
    <citation type="journal article" date="1993" name="Development">
        <title>Puffs and PCR: the in vivo dynamics of early gene expression during ecdysone responses in Drosophila.</title>
        <authorList>
            <person name="Huet F."/>
            <person name="Ruiz C."/>
            <person name="Richards G."/>
        </authorList>
    </citation>
    <scope>FUNCTION</scope>
    <scope>DEVELOPMENTAL STAGE</scope>
    <scope>INDUCTION</scope>
</reference>
<gene>
    <name type="primary">Eip75B</name>
    <name type="synonym">NR1D3</name>
    <name type="ORF">CG8127</name>
</gene>
<proteinExistence type="evidence at transcript level"/>
<keyword id="KW-0025">Alternative splicing</keyword>
<keyword id="KW-0217">Developmental protein</keyword>
<keyword id="KW-0238">DNA-binding</keyword>
<keyword id="KW-0479">Metal-binding</keyword>
<keyword id="KW-0539">Nucleus</keyword>
<keyword id="KW-0675">Receptor</keyword>
<keyword id="KW-1185">Reference proteome</keyword>
<keyword id="KW-0804">Transcription</keyword>
<keyword id="KW-0805">Transcription regulation</keyword>
<keyword id="KW-0862">Zinc</keyword>
<keyword id="KW-0863">Zinc-finger</keyword>
<feature type="chain" id="PRO_0000053506" description="Ecdysone-induced protein 75B, isoforms C/D">
    <location>
        <begin position="1"/>
        <end position="1199"/>
    </location>
</feature>
<feature type="domain" description="NR LBD" evidence="2">
    <location>
        <begin position="352"/>
        <end position="600"/>
    </location>
</feature>
<feature type="DNA-binding region" description="Nuclear receptor" evidence="1">
    <location>
        <begin position="242"/>
        <end position="318"/>
    </location>
</feature>
<feature type="zinc finger region" description="NR C4-type" evidence="1">
    <location>
        <begin position="245"/>
        <end position="265"/>
    </location>
</feature>
<feature type="zinc finger region" description="NR C4-type" evidence="1">
    <location>
        <begin position="282"/>
        <end position="306"/>
    </location>
</feature>
<feature type="region of interest" description="Disordered" evidence="3">
    <location>
        <begin position="130"/>
        <end position="182"/>
    </location>
</feature>
<feature type="region of interest" description="Disordered" evidence="3">
    <location>
        <begin position="624"/>
        <end position="665"/>
    </location>
</feature>
<feature type="region of interest" description="Disordered" evidence="3">
    <location>
        <begin position="771"/>
        <end position="808"/>
    </location>
</feature>
<feature type="region of interest" description="Disordered" evidence="3">
    <location>
        <begin position="831"/>
        <end position="851"/>
    </location>
</feature>
<feature type="region of interest" description="Disordered" evidence="3">
    <location>
        <begin position="895"/>
        <end position="961"/>
    </location>
</feature>
<feature type="region of interest" description="Disordered" evidence="3">
    <location>
        <begin position="991"/>
        <end position="1104"/>
    </location>
</feature>
<feature type="region of interest" description="Disordered" evidence="3">
    <location>
        <begin position="1155"/>
        <end position="1188"/>
    </location>
</feature>
<feature type="compositionally biased region" description="Low complexity" evidence="3">
    <location>
        <begin position="139"/>
        <end position="149"/>
    </location>
</feature>
<feature type="compositionally biased region" description="Low complexity" evidence="3">
    <location>
        <begin position="162"/>
        <end position="172"/>
    </location>
</feature>
<feature type="compositionally biased region" description="Low complexity" evidence="3">
    <location>
        <begin position="641"/>
        <end position="653"/>
    </location>
</feature>
<feature type="compositionally biased region" description="Low complexity" evidence="3">
    <location>
        <begin position="792"/>
        <end position="804"/>
    </location>
</feature>
<feature type="compositionally biased region" description="Low complexity" evidence="3">
    <location>
        <begin position="831"/>
        <end position="845"/>
    </location>
</feature>
<feature type="compositionally biased region" description="Low complexity" evidence="3">
    <location>
        <begin position="897"/>
        <end position="942"/>
    </location>
</feature>
<feature type="compositionally biased region" description="Low complexity" evidence="3">
    <location>
        <begin position="950"/>
        <end position="961"/>
    </location>
</feature>
<feature type="compositionally biased region" description="Polar residues" evidence="3">
    <location>
        <begin position="993"/>
        <end position="1006"/>
    </location>
</feature>
<feature type="compositionally biased region" description="Polar residues" evidence="3">
    <location>
        <begin position="1018"/>
        <end position="1040"/>
    </location>
</feature>
<feature type="compositionally biased region" description="Low complexity" evidence="3">
    <location>
        <begin position="1041"/>
        <end position="1077"/>
    </location>
</feature>
<feature type="compositionally biased region" description="Low complexity" evidence="3">
    <location>
        <begin position="1086"/>
        <end position="1104"/>
    </location>
</feature>
<feature type="compositionally biased region" description="Low complexity" evidence="3">
    <location>
        <begin position="1159"/>
        <end position="1187"/>
    </location>
</feature>
<feature type="splice variant" id="VSP_014915" description="In isoform D." evidence="5">
    <location>
        <begin position="1"/>
        <end position="293"/>
    </location>
</feature>
<feature type="splice variant" id="VSP_014916" description="In isoform D." evidence="5">
    <original>NRNRCQYCRLKKCIAVGMSRDA</original>
    <variation>MGEELPILKGILKGNVNYHNAP</variation>
    <location>
        <begin position="294"/>
        <end position="315"/>
    </location>
</feature>
<feature type="sequence conflict" description="In Ref. 4; ACD81870." evidence="6" ref="4">
    <original>D</original>
    <variation>G</variation>
    <location>
        <position position="239"/>
    </location>
</feature>
<feature type="sequence conflict" description="In Ref. 4; ACD81870." evidence="6" ref="4">
    <original>T</original>
    <variation>N</variation>
    <location>
        <position position="572"/>
    </location>
</feature>
<feature type="sequence conflict" description="In Ref. 4; ACD81870." evidence="6" ref="4">
    <original>L</original>
    <variation>P</variation>
    <location>
        <position position="578"/>
    </location>
</feature>
<feature type="sequence conflict" description="In Ref. 4; ACD81870." evidence="6" ref="4">
    <original>H</original>
    <variation>R</variation>
    <location>
        <position position="889"/>
    </location>
</feature>